<protein>
    <recommendedName>
        <fullName>Cold shock-like protein CspE</fullName>
        <shortName>CSP-E</shortName>
    </recommendedName>
</protein>
<name>CSPE_BUCAI</name>
<proteinExistence type="inferred from homology"/>
<keyword id="KW-0010">Activator</keyword>
<keyword id="KW-0963">Cytoplasm</keyword>
<keyword id="KW-0238">DNA-binding</keyword>
<keyword id="KW-1185">Reference proteome</keyword>
<keyword id="KW-0804">Transcription</keyword>
<keyword id="KW-0805">Transcription regulation</keyword>
<dbReference type="EMBL" id="BA000003">
    <property type="protein sequence ID" value="BAB13185.1"/>
    <property type="molecule type" value="Genomic_DNA"/>
</dbReference>
<dbReference type="RefSeq" id="NP_240299.1">
    <property type="nucleotide sequence ID" value="NC_002528.1"/>
</dbReference>
<dbReference type="RefSeq" id="WP_009874442.1">
    <property type="nucleotide sequence ID" value="NZ_AP036055.1"/>
</dbReference>
<dbReference type="SMR" id="P63237"/>
<dbReference type="STRING" id="563178.BUAP5A_482"/>
<dbReference type="EnsemblBacteria" id="BAB13185">
    <property type="protein sequence ID" value="BAB13185"/>
    <property type="gene ID" value="BAB13185"/>
</dbReference>
<dbReference type="GeneID" id="93003945"/>
<dbReference type="KEGG" id="buc:BU489"/>
<dbReference type="PATRIC" id="fig|107806.10.peg.497"/>
<dbReference type="eggNOG" id="COG1278">
    <property type="taxonomic scope" value="Bacteria"/>
</dbReference>
<dbReference type="HOGENOM" id="CLU_117621_2_1_6"/>
<dbReference type="Proteomes" id="UP000001806">
    <property type="component" value="Chromosome"/>
</dbReference>
<dbReference type="GO" id="GO:0005829">
    <property type="term" value="C:cytosol"/>
    <property type="evidence" value="ECO:0007669"/>
    <property type="project" value="UniProtKB-ARBA"/>
</dbReference>
<dbReference type="GO" id="GO:0003677">
    <property type="term" value="F:DNA binding"/>
    <property type="evidence" value="ECO:0007669"/>
    <property type="project" value="UniProtKB-KW"/>
</dbReference>
<dbReference type="CDD" id="cd04458">
    <property type="entry name" value="CSP_CDS"/>
    <property type="match status" value="1"/>
</dbReference>
<dbReference type="FunFam" id="2.40.50.140:FF:000006">
    <property type="entry name" value="Cold shock protein CspC"/>
    <property type="match status" value="1"/>
</dbReference>
<dbReference type="Gene3D" id="6.20.370.130">
    <property type="match status" value="1"/>
</dbReference>
<dbReference type="Gene3D" id="2.40.50.140">
    <property type="entry name" value="Nucleic acid-binding proteins"/>
    <property type="match status" value="1"/>
</dbReference>
<dbReference type="InterPro" id="IPR012156">
    <property type="entry name" value="Cold_shock_CspA"/>
</dbReference>
<dbReference type="InterPro" id="IPR050181">
    <property type="entry name" value="Cold_shock_domain"/>
</dbReference>
<dbReference type="InterPro" id="IPR011129">
    <property type="entry name" value="CSD"/>
</dbReference>
<dbReference type="InterPro" id="IPR019844">
    <property type="entry name" value="CSD_CS"/>
</dbReference>
<dbReference type="InterPro" id="IPR002059">
    <property type="entry name" value="CSP_DNA-bd"/>
</dbReference>
<dbReference type="InterPro" id="IPR012340">
    <property type="entry name" value="NA-bd_OB-fold"/>
</dbReference>
<dbReference type="NCBIfam" id="NF007062">
    <property type="entry name" value="PRK09507.1"/>
    <property type="match status" value="1"/>
</dbReference>
<dbReference type="NCBIfam" id="NF008190">
    <property type="entry name" value="PRK10943.1"/>
    <property type="match status" value="1"/>
</dbReference>
<dbReference type="PANTHER" id="PTHR11544">
    <property type="entry name" value="COLD SHOCK DOMAIN CONTAINING PROTEINS"/>
    <property type="match status" value="1"/>
</dbReference>
<dbReference type="Pfam" id="PF00313">
    <property type="entry name" value="CSD"/>
    <property type="match status" value="1"/>
</dbReference>
<dbReference type="PIRSF" id="PIRSF002599">
    <property type="entry name" value="Cold_shock_A"/>
    <property type="match status" value="1"/>
</dbReference>
<dbReference type="PRINTS" id="PR00050">
    <property type="entry name" value="COLDSHOCK"/>
</dbReference>
<dbReference type="SMART" id="SM00357">
    <property type="entry name" value="CSP"/>
    <property type="match status" value="1"/>
</dbReference>
<dbReference type="SUPFAM" id="SSF50249">
    <property type="entry name" value="Nucleic acid-binding proteins"/>
    <property type="match status" value="1"/>
</dbReference>
<dbReference type="PROSITE" id="PS00352">
    <property type="entry name" value="CSD_1"/>
    <property type="match status" value="1"/>
</dbReference>
<dbReference type="PROSITE" id="PS51857">
    <property type="entry name" value="CSD_2"/>
    <property type="match status" value="1"/>
</dbReference>
<comment type="subcellular location">
    <subcellularLocation>
        <location evidence="1">Cytoplasm</location>
    </subcellularLocation>
</comment>
<sequence>MSKIKGNVKWFNESKGFGFITPEDGSKDVFVHFSAIQSNGFKTLAEGQSVEFEITEGAKGPSAANVISL</sequence>
<reference key="1">
    <citation type="journal article" date="2000" name="Nature">
        <title>Genome sequence of the endocellular bacterial symbiont of aphids Buchnera sp. APS.</title>
        <authorList>
            <person name="Shigenobu S."/>
            <person name="Watanabe H."/>
            <person name="Hattori M."/>
            <person name="Sakaki Y."/>
            <person name="Ishikawa H."/>
        </authorList>
    </citation>
    <scope>NUCLEOTIDE SEQUENCE [LARGE SCALE GENOMIC DNA]</scope>
    <source>
        <strain>APS</strain>
    </source>
</reference>
<feature type="initiator methionine" description="Removed" evidence="1">
    <location>
        <position position="1"/>
    </location>
</feature>
<feature type="chain" id="PRO_0000100257" description="Cold shock-like protein CspE">
    <location>
        <begin position="2"/>
        <end position="69"/>
    </location>
</feature>
<feature type="domain" description="CSD">
    <location>
        <begin position="6"/>
        <end position="66"/>
    </location>
</feature>
<gene>
    <name type="primary">cspE</name>
    <name type="ordered locus">BU489</name>
</gene>
<organism>
    <name type="scientific">Buchnera aphidicola subsp. Acyrthosiphon pisum (strain APS)</name>
    <name type="common">Acyrthosiphon pisum symbiotic bacterium</name>
    <dbReference type="NCBI Taxonomy" id="107806"/>
    <lineage>
        <taxon>Bacteria</taxon>
        <taxon>Pseudomonadati</taxon>
        <taxon>Pseudomonadota</taxon>
        <taxon>Gammaproteobacteria</taxon>
        <taxon>Enterobacterales</taxon>
        <taxon>Erwiniaceae</taxon>
        <taxon>Buchnera</taxon>
    </lineage>
</organism>
<evidence type="ECO:0000250" key="1"/>
<accession>P63237</accession>
<accession>P57560</accession>